<gene>
    <name type="primary">DAZL</name>
    <name type="synonym">DAZH</name>
    <name type="synonym">DAZL1</name>
    <name type="synonym">DAZLA</name>
    <name type="synonym">SPGYLA</name>
</gene>
<proteinExistence type="evidence at protein level"/>
<dbReference type="EMBL" id="U65918">
    <property type="protein sequence ID" value="AAC50813.1"/>
    <property type="molecule type" value="mRNA"/>
</dbReference>
<dbReference type="EMBL" id="U66726">
    <property type="protein sequence ID" value="AAB39935.1"/>
    <property type="molecule type" value="mRNA"/>
</dbReference>
<dbReference type="EMBL" id="U66078">
    <property type="protein sequence ID" value="AAB63596.1"/>
    <property type="molecule type" value="mRNA"/>
</dbReference>
<dbReference type="EMBL" id="U77476">
    <property type="protein sequence ID" value="AAB84361.1"/>
    <property type="molecule type" value="Genomic_DNA"/>
</dbReference>
<dbReference type="EMBL" id="U77467">
    <property type="protein sequence ID" value="AAB84361.1"/>
    <property type="status" value="JOINED"/>
    <property type="molecule type" value="Genomic_DNA"/>
</dbReference>
<dbReference type="EMBL" id="U77468">
    <property type="protein sequence ID" value="AAB84361.1"/>
    <property type="status" value="JOINED"/>
    <property type="molecule type" value="Genomic_DNA"/>
</dbReference>
<dbReference type="EMBL" id="U77469">
    <property type="protein sequence ID" value="AAB84361.1"/>
    <property type="status" value="JOINED"/>
    <property type="molecule type" value="Genomic_DNA"/>
</dbReference>
<dbReference type="EMBL" id="U77470">
    <property type="protein sequence ID" value="AAB84361.1"/>
    <property type="status" value="JOINED"/>
    <property type="molecule type" value="Genomic_DNA"/>
</dbReference>
<dbReference type="EMBL" id="U77471">
    <property type="protein sequence ID" value="AAB84361.1"/>
    <property type="status" value="JOINED"/>
    <property type="molecule type" value="Genomic_DNA"/>
</dbReference>
<dbReference type="EMBL" id="U77472">
    <property type="protein sequence ID" value="AAB84361.1"/>
    <property type="status" value="JOINED"/>
    <property type="molecule type" value="Genomic_DNA"/>
</dbReference>
<dbReference type="EMBL" id="U77473">
    <property type="protein sequence ID" value="AAB84361.1"/>
    <property type="status" value="JOINED"/>
    <property type="molecule type" value="Genomic_DNA"/>
</dbReference>
<dbReference type="EMBL" id="U77474">
    <property type="protein sequence ID" value="AAB84361.1"/>
    <property type="status" value="JOINED"/>
    <property type="molecule type" value="Genomic_DNA"/>
</dbReference>
<dbReference type="EMBL" id="U77475">
    <property type="protein sequence ID" value="AAB84361.1"/>
    <property type="status" value="JOINED"/>
    <property type="molecule type" value="Genomic_DNA"/>
</dbReference>
<dbReference type="EMBL" id="AK303026">
    <property type="protein sequence ID" value="BAG64152.1"/>
    <property type="molecule type" value="mRNA"/>
</dbReference>
<dbReference type="EMBL" id="BX648638">
    <property type="protein sequence ID" value="CAI45996.1"/>
    <property type="molecule type" value="mRNA"/>
</dbReference>
<dbReference type="EMBL" id="AC010139">
    <property type="status" value="NOT_ANNOTATED_CDS"/>
    <property type="molecule type" value="Genomic_DNA"/>
</dbReference>
<dbReference type="EMBL" id="CH471055">
    <property type="protein sequence ID" value="EAW64279.1"/>
    <property type="molecule type" value="Genomic_DNA"/>
</dbReference>
<dbReference type="EMBL" id="BC027595">
    <property type="protein sequence ID" value="AAH27595.1"/>
    <property type="molecule type" value="mRNA"/>
</dbReference>
<dbReference type="CCDS" id="CCDS43059.1">
    <molecule id="Q92904-1"/>
</dbReference>
<dbReference type="CCDS" id="CCDS54556.1">
    <molecule id="Q92904-2"/>
</dbReference>
<dbReference type="RefSeq" id="NP_001177740.1">
    <molecule id="Q92904-2"/>
    <property type="nucleotide sequence ID" value="NM_001190811.2"/>
</dbReference>
<dbReference type="RefSeq" id="NP_001342.2">
    <molecule id="Q92904-1"/>
    <property type="nucleotide sequence ID" value="NM_001351.3"/>
</dbReference>
<dbReference type="SMR" id="Q92904"/>
<dbReference type="BioGRID" id="107987">
    <property type="interactions" value="145"/>
</dbReference>
<dbReference type="FunCoup" id="Q92904">
    <property type="interactions" value="83"/>
</dbReference>
<dbReference type="IntAct" id="Q92904">
    <property type="interactions" value="15"/>
</dbReference>
<dbReference type="STRING" id="9606.ENSP00000250863"/>
<dbReference type="iPTMnet" id="Q92904"/>
<dbReference type="PhosphoSitePlus" id="Q92904"/>
<dbReference type="BioMuta" id="DAZL"/>
<dbReference type="DMDM" id="27805453"/>
<dbReference type="jPOST" id="Q92904"/>
<dbReference type="MassIVE" id="Q92904"/>
<dbReference type="PaxDb" id="9606-ENSP00000250863"/>
<dbReference type="PeptideAtlas" id="Q92904"/>
<dbReference type="ProteomicsDB" id="75589">
    <molecule id="Q92904-1"/>
</dbReference>
<dbReference type="ProteomicsDB" id="75590">
    <molecule id="Q92904-2"/>
</dbReference>
<dbReference type="Antibodypedia" id="6122">
    <property type="antibodies" value="329 antibodies from 37 providers"/>
</dbReference>
<dbReference type="DNASU" id="1618"/>
<dbReference type="Ensembl" id="ENST00000250863.12">
    <molecule id="Q92904-2"/>
    <property type="protein sequence ID" value="ENSP00000250863.8"/>
    <property type="gene ID" value="ENSG00000092345.14"/>
</dbReference>
<dbReference type="Ensembl" id="ENST00000399444.7">
    <molecule id="Q92904-1"/>
    <property type="protein sequence ID" value="ENSP00000382373.3"/>
    <property type="gene ID" value="ENSG00000092345.14"/>
</dbReference>
<dbReference type="GeneID" id="1618"/>
<dbReference type="KEGG" id="hsa:1618"/>
<dbReference type="MANE-Select" id="ENST00000399444.7">
    <property type="protein sequence ID" value="ENSP00000382373.3"/>
    <property type="RefSeq nucleotide sequence ID" value="NM_001351.4"/>
    <property type="RefSeq protein sequence ID" value="NP_001342.2"/>
</dbReference>
<dbReference type="UCSC" id="uc003cba.4">
    <molecule id="Q92904-1"/>
    <property type="organism name" value="human"/>
</dbReference>
<dbReference type="AGR" id="HGNC:2685"/>
<dbReference type="CTD" id="1618"/>
<dbReference type="DisGeNET" id="1618"/>
<dbReference type="GeneCards" id="DAZL"/>
<dbReference type="HGNC" id="HGNC:2685">
    <property type="gene designation" value="DAZL"/>
</dbReference>
<dbReference type="HPA" id="ENSG00000092345">
    <property type="expression patterns" value="Tissue enriched (testis)"/>
</dbReference>
<dbReference type="MalaCards" id="DAZL"/>
<dbReference type="MIM" id="601486">
    <property type="type" value="gene"/>
</dbReference>
<dbReference type="neXtProt" id="NX_Q92904"/>
<dbReference type="OpenTargets" id="ENSG00000092345"/>
<dbReference type="PharmGKB" id="PA27155"/>
<dbReference type="VEuPathDB" id="HostDB:ENSG00000092345"/>
<dbReference type="eggNOG" id="KOG0118">
    <property type="taxonomic scope" value="Eukaryota"/>
</dbReference>
<dbReference type="GeneTree" id="ENSGT00530000063480"/>
<dbReference type="HOGENOM" id="CLU_084802_0_0_1"/>
<dbReference type="InParanoid" id="Q92904"/>
<dbReference type="OMA" id="SQEDYFK"/>
<dbReference type="OrthoDB" id="762982at2759"/>
<dbReference type="PAN-GO" id="Q92904">
    <property type="GO annotations" value="5 GO annotations based on evolutionary models"/>
</dbReference>
<dbReference type="PhylomeDB" id="Q92904"/>
<dbReference type="TreeFam" id="TF324396"/>
<dbReference type="PathwayCommons" id="Q92904"/>
<dbReference type="SignaLink" id="Q92904"/>
<dbReference type="BioGRID-ORCS" id="1618">
    <property type="hits" value="33 hits in 1143 CRISPR screens"/>
</dbReference>
<dbReference type="CD-CODE" id="DEE660B4">
    <property type="entry name" value="Stress granule"/>
</dbReference>
<dbReference type="ChiTaRS" id="DAZL">
    <property type="organism name" value="human"/>
</dbReference>
<dbReference type="GeneWiki" id="DAZL"/>
<dbReference type="GenomeRNAi" id="1618"/>
<dbReference type="Pharos" id="Q92904">
    <property type="development level" value="Tbio"/>
</dbReference>
<dbReference type="PRO" id="PR:Q92904"/>
<dbReference type="Proteomes" id="UP000005640">
    <property type="component" value="Chromosome 3"/>
</dbReference>
<dbReference type="RNAct" id="Q92904">
    <property type="molecule type" value="protein"/>
</dbReference>
<dbReference type="Bgee" id="ENSG00000092345">
    <property type="expression patterns" value="Expressed in oocyte and 56 other cell types or tissues"/>
</dbReference>
<dbReference type="ExpressionAtlas" id="Q92904">
    <property type="expression patterns" value="baseline and differential"/>
</dbReference>
<dbReference type="GO" id="GO:0005737">
    <property type="term" value="C:cytoplasm"/>
    <property type="evidence" value="ECO:0000314"/>
    <property type="project" value="UniProtKB"/>
</dbReference>
<dbReference type="GO" id="GO:0005634">
    <property type="term" value="C:nucleus"/>
    <property type="evidence" value="ECO:0007669"/>
    <property type="project" value="UniProtKB-SubCell"/>
</dbReference>
<dbReference type="GO" id="GO:0032991">
    <property type="term" value="C:protein-containing complex"/>
    <property type="evidence" value="ECO:0000314"/>
    <property type="project" value="UniProtKB"/>
</dbReference>
<dbReference type="GO" id="GO:0005840">
    <property type="term" value="C:ribosome"/>
    <property type="evidence" value="ECO:0007669"/>
    <property type="project" value="Ensembl"/>
</dbReference>
<dbReference type="GO" id="GO:0042802">
    <property type="term" value="F:identical protein binding"/>
    <property type="evidence" value="ECO:0007669"/>
    <property type="project" value="Ensembl"/>
</dbReference>
<dbReference type="GO" id="GO:0003730">
    <property type="term" value="F:mRNA 3'-UTR binding"/>
    <property type="evidence" value="ECO:0000318"/>
    <property type="project" value="GO_Central"/>
</dbReference>
<dbReference type="GO" id="GO:0003723">
    <property type="term" value="F:RNA binding"/>
    <property type="evidence" value="ECO:0000304"/>
    <property type="project" value="ProtInc"/>
</dbReference>
<dbReference type="GO" id="GO:0008494">
    <property type="term" value="F:translation activator activity"/>
    <property type="evidence" value="ECO:0000314"/>
    <property type="project" value="UniProtKB"/>
</dbReference>
<dbReference type="GO" id="GO:0070935">
    <property type="term" value="P:3'-UTR-mediated mRNA stabilization"/>
    <property type="evidence" value="ECO:0000318"/>
    <property type="project" value="GO_Central"/>
</dbReference>
<dbReference type="GO" id="GO:0007147">
    <property type="term" value="P:female meiosis II"/>
    <property type="evidence" value="ECO:0007669"/>
    <property type="project" value="Ensembl"/>
</dbReference>
<dbReference type="GO" id="GO:0007281">
    <property type="term" value="P:germ cell development"/>
    <property type="evidence" value="ECO:0000304"/>
    <property type="project" value="ProtInc"/>
</dbReference>
<dbReference type="GO" id="GO:0001556">
    <property type="term" value="P:oocyte maturation"/>
    <property type="evidence" value="ECO:0007669"/>
    <property type="project" value="Ensembl"/>
</dbReference>
<dbReference type="GO" id="GO:0045836">
    <property type="term" value="P:positive regulation of meiotic nuclear division"/>
    <property type="evidence" value="ECO:0007669"/>
    <property type="project" value="Ensembl"/>
</dbReference>
<dbReference type="GO" id="GO:0045948">
    <property type="term" value="P:positive regulation of translational initiation"/>
    <property type="evidence" value="ECO:0000314"/>
    <property type="project" value="UniProtKB"/>
</dbReference>
<dbReference type="GO" id="GO:0007283">
    <property type="term" value="P:spermatogenesis"/>
    <property type="evidence" value="ECO:0007669"/>
    <property type="project" value="UniProtKB-KW"/>
</dbReference>
<dbReference type="CDD" id="cd12672">
    <property type="entry name" value="RRM_DAZL"/>
    <property type="match status" value="1"/>
</dbReference>
<dbReference type="FunFam" id="3.30.70.330:FF:000180">
    <property type="entry name" value="Deleted in azoospermia-like"/>
    <property type="match status" value="1"/>
</dbReference>
<dbReference type="Gene3D" id="3.30.70.330">
    <property type="match status" value="1"/>
</dbReference>
<dbReference type="InterPro" id="IPR043628">
    <property type="entry name" value="DAZ_dom"/>
</dbReference>
<dbReference type="InterPro" id="IPR037551">
    <property type="entry name" value="DAZ_RRM_vert"/>
</dbReference>
<dbReference type="InterPro" id="IPR012677">
    <property type="entry name" value="Nucleotide-bd_a/b_plait_sf"/>
</dbReference>
<dbReference type="InterPro" id="IPR035979">
    <property type="entry name" value="RBD_domain_sf"/>
</dbReference>
<dbReference type="InterPro" id="IPR000504">
    <property type="entry name" value="RRM_dom"/>
</dbReference>
<dbReference type="PANTHER" id="PTHR11176">
    <property type="entry name" value="BOULE-RELATED"/>
    <property type="match status" value="1"/>
</dbReference>
<dbReference type="PANTHER" id="PTHR11176:SF4">
    <property type="entry name" value="DELETED IN AZOOSPERMIA-LIKE"/>
    <property type="match status" value="1"/>
</dbReference>
<dbReference type="Pfam" id="PF18872">
    <property type="entry name" value="Daz"/>
    <property type="match status" value="1"/>
</dbReference>
<dbReference type="Pfam" id="PF00076">
    <property type="entry name" value="RRM_1"/>
    <property type="match status" value="1"/>
</dbReference>
<dbReference type="SMART" id="SM00360">
    <property type="entry name" value="RRM"/>
    <property type="match status" value="1"/>
</dbReference>
<dbReference type="SUPFAM" id="SSF54928">
    <property type="entry name" value="RNA-binding domain, RBD"/>
    <property type="match status" value="1"/>
</dbReference>
<dbReference type="PROSITE" id="PS51890">
    <property type="entry name" value="DAZ"/>
    <property type="match status" value="1"/>
</dbReference>
<dbReference type="PROSITE" id="PS50102">
    <property type="entry name" value="RRM"/>
    <property type="match status" value="1"/>
</dbReference>
<evidence type="ECO:0000250" key="1"/>
<evidence type="ECO:0000250" key="2">
    <source>
        <dbReference type="UniProtKB" id="Q64368"/>
    </source>
</evidence>
<evidence type="ECO:0000255" key="3">
    <source>
        <dbReference type="PROSITE-ProRule" id="PRU00176"/>
    </source>
</evidence>
<evidence type="ECO:0000255" key="4">
    <source>
        <dbReference type="PROSITE-ProRule" id="PRU01238"/>
    </source>
</evidence>
<evidence type="ECO:0000256" key="5">
    <source>
        <dbReference type="SAM" id="MobiDB-lite"/>
    </source>
</evidence>
<evidence type="ECO:0000269" key="6">
    <source>
    </source>
</evidence>
<evidence type="ECO:0000269" key="7">
    <source>
    </source>
</evidence>
<evidence type="ECO:0000269" key="8">
    <source>
    </source>
</evidence>
<evidence type="ECO:0000269" key="9">
    <source>
    </source>
</evidence>
<evidence type="ECO:0000269" key="10">
    <source>
    </source>
</evidence>
<evidence type="ECO:0000269" key="11">
    <source>
    </source>
</evidence>
<evidence type="ECO:0000269" key="12">
    <source>
    </source>
</evidence>
<evidence type="ECO:0000269" key="13">
    <source>
    </source>
</evidence>
<evidence type="ECO:0000269" key="14">
    <source>
    </source>
</evidence>
<evidence type="ECO:0000303" key="15">
    <source>
    </source>
</evidence>
<evidence type="ECO:0000303" key="16">
    <source>
    </source>
</evidence>
<evidence type="ECO:0000305" key="17"/>
<sequence length="295" mass="33178">MSTANPETPNSTISREASTQSSSAATSQGYILPEGKIMPNTVFVGGIDVRMDETEIRSFFARYGSVKEVKIITDRTGVSKGYGFVSFFNDVDVQKIVESQINFHGKKLKLGPAIRKQNLCAYHVQPRPLVFNHPPPPQFQNVWTNPNTETYMQPTTTMNPITQYVQAYPTYPNSPVQVITGYQLPVYNYQMPPQWPVGEQRSYVVPPAYSAVNYHCNEVDPGAEVVPNECSVHEATPPSGNGPQKKSVDRSIQTVVSCLFNPENRLRNSVVTQDDYFKDKRVHHFRRSRAMLKSV</sequence>
<protein>
    <recommendedName>
        <fullName>Deleted in azoospermia-like</fullName>
    </recommendedName>
    <alternativeName>
        <fullName>DAZ homolog</fullName>
    </alternativeName>
    <alternativeName>
        <fullName>DAZ-like autosomal</fullName>
    </alternativeName>
    <alternativeName>
        <fullName>Deleted in azoospermia-like 1</fullName>
    </alternativeName>
    <alternativeName>
        <fullName>SPGY-like-autosomal</fullName>
    </alternativeName>
</protein>
<feature type="chain" id="PRO_0000081559" description="Deleted in azoospermia-like">
    <location>
        <begin position="1"/>
        <end position="295"/>
    </location>
</feature>
<feature type="domain" description="RRM" evidence="3">
    <location>
        <begin position="40"/>
        <end position="115"/>
    </location>
</feature>
<feature type="domain" description="DAZ" evidence="4">
    <location>
        <begin position="167"/>
        <end position="190"/>
    </location>
</feature>
<feature type="region of interest" description="Disordered" evidence="5">
    <location>
        <begin position="1"/>
        <end position="25"/>
    </location>
</feature>
<feature type="region of interest" description="Homodimerization" evidence="1">
    <location>
        <begin position="80"/>
        <end position="132"/>
    </location>
</feature>
<feature type="compositionally biased region" description="Polar residues" evidence="5">
    <location>
        <begin position="1"/>
        <end position="10"/>
    </location>
</feature>
<feature type="compositionally biased region" description="Low complexity" evidence="5">
    <location>
        <begin position="11"/>
        <end position="25"/>
    </location>
</feature>
<feature type="modified residue" description="Phosphotyrosine" evidence="2">
    <location>
        <position position="276"/>
    </location>
</feature>
<feature type="splice variant" id="VSP_043208" description="In isoform 2." evidence="15 16">
    <original>M</original>
    <variation>MAAPSCGGDRKARLTPSLPHE</variation>
    <location>
        <position position="1"/>
    </location>
</feature>
<feature type="sequence variant" id="VAR_017780" description="In dbSNP:rs11710967." evidence="8">
    <original>T</original>
    <variation>A</variation>
    <location>
        <position position="12"/>
    </location>
</feature>
<feature type="sequence variant" id="VAR_017781" description="Probable risk factor for spermatogenic failure; this substitution may lead to affect the DAZL transcript stability and prevent its translation; dbSNP:rs121918346." evidence="8">
    <original>T</original>
    <variation>A</variation>
    <location>
        <position position="54"/>
    </location>
</feature>
<feature type="sequence variant" id="VAR_069231" description="Severely impaired RNA-binding." evidence="10">
    <original>R</original>
    <variation>G</variation>
    <location>
        <position position="115"/>
    </location>
</feature>
<feature type="sequence conflict" description="In Ref. 3; AAB63596." evidence="17" ref="3">
    <original>T</original>
    <variation>I</variation>
    <location>
        <position position="3"/>
    </location>
</feature>
<feature type="sequence conflict" description="In Ref. 4; AAB84361." evidence="17" ref="4">
    <original>Q</original>
    <variation>R</variation>
    <location>
        <position position="253"/>
    </location>
</feature>
<comment type="function">
    <text evidence="1">RNA-binding protein, which is essential for gametogenesis in both males and females. Plays a central role during spermatogenesis. Acts by binding to the 3'-UTR of mRNA, specifically recognizing GUU triplets, and thereby regulating the translation of key transcripts (By similarity).</text>
</comment>
<comment type="subunit">
    <text evidence="1 6 7 9">Homodimer and heterodimer. Multiple DAZL RRMs can bind to a single RNA containing multiple GUU triplets (By similarity). Forms a heterodimer with DAZ. Interacts with BOLL, DAZAP1 and DAZAP2. Interacts with PUM2.</text>
</comment>
<comment type="interaction">
    <interactant intactId="EBI-998153">
        <id>Q92904</id>
    </interactant>
    <interactant intactId="EBI-997955">
        <id>Q9NQZ3</id>
        <label>DAZ1</label>
    </interactant>
    <organismsDiffer>false</organismsDiffer>
    <experiments>2</experiments>
</comment>
<comment type="subcellular location">
    <subcellularLocation>
        <location evidence="11">Cytoplasm</location>
    </subcellularLocation>
    <subcellularLocation>
        <location evidence="1">Nucleus</location>
    </subcellularLocation>
    <text evidence="1">Predominantly cytoplasmic. Nuclear in spermatogonia until near the end of the meiotic prophase and cytoplasmic localization from then onward.</text>
</comment>
<comment type="alternative products">
    <event type="alternative splicing"/>
    <isoform>
        <id>Q92904-1</id>
        <name>1</name>
        <sequence type="displayed"/>
    </isoform>
    <isoform>
        <id>Q92904-2</id>
        <name>2</name>
        <sequence type="described" ref="VSP_043208"/>
    </isoform>
</comment>
<comment type="tissue specificity">
    <text evidence="12 13 14">Testis specific.</text>
</comment>
<comment type="domain">
    <text evidence="6">The DAZ domain mediates the interaction with DAZAP1 and DAZAP2.</text>
</comment>
<comment type="similarity">
    <text evidence="4">Belongs to the RRM DAZ family.</text>
</comment>
<name>DAZL_HUMAN</name>
<keyword id="KW-0025">Alternative splicing</keyword>
<keyword id="KW-0963">Cytoplasm</keyword>
<keyword id="KW-0217">Developmental protein</keyword>
<keyword id="KW-0221">Differentiation</keyword>
<keyword id="KW-0539">Nucleus</keyword>
<keyword id="KW-0597">Phosphoprotein</keyword>
<keyword id="KW-1267">Proteomics identification</keyword>
<keyword id="KW-1185">Reference proteome</keyword>
<keyword id="KW-0694">RNA-binding</keyword>
<keyword id="KW-0744">Spermatogenesis</keyword>
<keyword id="KW-0810">Translation regulation</keyword>
<organism>
    <name type="scientific">Homo sapiens</name>
    <name type="common">Human</name>
    <dbReference type="NCBI Taxonomy" id="9606"/>
    <lineage>
        <taxon>Eukaryota</taxon>
        <taxon>Metazoa</taxon>
        <taxon>Chordata</taxon>
        <taxon>Craniata</taxon>
        <taxon>Vertebrata</taxon>
        <taxon>Euteleostomi</taxon>
        <taxon>Mammalia</taxon>
        <taxon>Eutheria</taxon>
        <taxon>Euarchontoglires</taxon>
        <taxon>Primates</taxon>
        <taxon>Haplorrhini</taxon>
        <taxon>Catarrhini</taxon>
        <taxon>Hominidae</taxon>
        <taxon>Homo</taxon>
    </lineage>
</organism>
<reference key="1">
    <citation type="journal article" date="1996" name="Nat. Genet.">
        <title>The DAZ gene cluster on the human Y chromosome arose from an autosomal gene that was transposed, repeatedly amplified and pruned.</title>
        <authorList>
            <person name="Saxena R."/>
            <person name="Brown L.G."/>
            <person name="Hawkins T."/>
            <person name="Alagappan R.K."/>
            <person name="Skaletsky H."/>
            <person name="Reeve M.P."/>
            <person name="Reijo R.A."/>
            <person name="Rozen S."/>
            <person name="Dinulos M.B."/>
            <person name="Disteche C.M."/>
            <person name="Page D.C."/>
        </authorList>
    </citation>
    <scope>NUCLEOTIDE SEQUENCE [MRNA] (ISOFORM 1)</scope>
    <scope>TISSUE SPECIFICITY</scope>
    <source>
        <tissue>Testis</tissue>
    </source>
</reference>
<reference key="2">
    <citation type="journal article" date="1996" name="Hum. Mol. Genet.">
        <title>A SPGY copy homologous to the mouse gene Dazla and the Drosophila gene boule is autosomal and expressed only in the human male gonad.</title>
        <authorList>
            <person name="Shan Z."/>
            <person name="Hirschmann P."/>
            <person name="Seebacher T."/>
            <person name="Edelmann A."/>
            <person name="Jauch A."/>
            <person name="Morell J."/>
            <person name="Urbitsch P."/>
            <person name="Vogt P.H."/>
        </authorList>
    </citation>
    <scope>NUCLEOTIDE SEQUENCE [MRNA] (ISOFORM 1)</scope>
    <scope>TISSUE SPECIFICITY</scope>
    <source>
        <tissue>Testis</tissue>
    </source>
</reference>
<reference key="3">
    <citation type="journal article" date="1996" name="Hum. Mol. Genet.">
        <title>The human autosomal gene DAZLA: testis specificity and a candidate for male infertility.</title>
        <authorList>
            <person name="Yen P.H."/>
            <person name="Chai N.-N."/>
            <person name="Salido E.C."/>
        </authorList>
    </citation>
    <scope>NUCLEOTIDE SEQUENCE [MRNA] (ISOFORM 1)</scope>
    <scope>TISSUE SPECIFICITY</scope>
    <source>
        <tissue>Testis</tissue>
    </source>
</reference>
<reference key="4">
    <citation type="journal article" date="1997" name="Mol. Hum. Reprod.">
        <title>A putative human male infertility gene DAZLA: genomic structure and methylation status.</title>
        <authorList>
            <person name="Chai N.-N."/>
            <person name="Phillips A."/>
            <person name="Fernandez A."/>
            <person name="Yen P.H."/>
        </authorList>
    </citation>
    <scope>NUCLEOTIDE SEQUENCE [GENOMIC DNA] (ISOFORM 1)</scope>
</reference>
<reference key="5">
    <citation type="journal article" date="2004" name="Nat. Genet.">
        <title>Complete sequencing and characterization of 21,243 full-length human cDNAs.</title>
        <authorList>
            <person name="Ota T."/>
            <person name="Suzuki Y."/>
            <person name="Nishikawa T."/>
            <person name="Otsuki T."/>
            <person name="Sugiyama T."/>
            <person name="Irie R."/>
            <person name="Wakamatsu A."/>
            <person name="Hayashi K."/>
            <person name="Sato H."/>
            <person name="Nagai K."/>
            <person name="Kimura K."/>
            <person name="Makita H."/>
            <person name="Sekine M."/>
            <person name="Obayashi M."/>
            <person name="Nishi T."/>
            <person name="Shibahara T."/>
            <person name="Tanaka T."/>
            <person name="Ishii S."/>
            <person name="Yamamoto J."/>
            <person name="Saito K."/>
            <person name="Kawai Y."/>
            <person name="Isono Y."/>
            <person name="Nakamura Y."/>
            <person name="Nagahari K."/>
            <person name="Murakami K."/>
            <person name="Yasuda T."/>
            <person name="Iwayanagi T."/>
            <person name="Wagatsuma M."/>
            <person name="Shiratori A."/>
            <person name="Sudo H."/>
            <person name="Hosoiri T."/>
            <person name="Kaku Y."/>
            <person name="Kodaira H."/>
            <person name="Kondo H."/>
            <person name="Sugawara M."/>
            <person name="Takahashi M."/>
            <person name="Kanda K."/>
            <person name="Yokoi T."/>
            <person name="Furuya T."/>
            <person name="Kikkawa E."/>
            <person name="Omura Y."/>
            <person name="Abe K."/>
            <person name="Kamihara K."/>
            <person name="Katsuta N."/>
            <person name="Sato K."/>
            <person name="Tanikawa M."/>
            <person name="Yamazaki M."/>
            <person name="Ninomiya K."/>
            <person name="Ishibashi T."/>
            <person name="Yamashita H."/>
            <person name="Murakawa K."/>
            <person name="Fujimori K."/>
            <person name="Tanai H."/>
            <person name="Kimata M."/>
            <person name="Watanabe M."/>
            <person name="Hiraoka S."/>
            <person name="Chiba Y."/>
            <person name="Ishida S."/>
            <person name="Ono Y."/>
            <person name="Takiguchi S."/>
            <person name="Watanabe S."/>
            <person name="Yosida M."/>
            <person name="Hotuta T."/>
            <person name="Kusano J."/>
            <person name="Kanehori K."/>
            <person name="Takahashi-Fujii A."/>
            <person name="Hara H."/>
            <person name="Tanase T.-O."/>
            <person name="Nomura Y."/>
            <person name="Togiya S."/>
            <person name="Komai F."/>
            <person name="Hara R."/>
            <person name="Takeuchi K."/>
            <person name="Arita M."/>
            <person name="Imose N."/>
            <person name="Musashino K."/>
            <person name="Yuuki H."/>
            <person name="Oshima A."/>
            <person name="Sasaki N."/>
            <person name="Aotsuka S."/>
            <person name="Yoshikawa Y."/>
            <person name="Matsunawa H."/>
            <person name="Ichihara T."/>
            <person name="Shiohata N."/>
            <person name="Sano S."/>
            <person name="Moriya S."/>
            <person name="Momiyama H."/>
            <person name="Satoh N."/>
            <person name="Takami S."/>
            <person name="Terashima Y."/>
            <person name="Suzuki O."/>
            <person name="Nakagawa S."/>
            <person name="Senoh A."/>
            <person name="Mizoguchi H."/>
            <person name="Goto Y."/>
            <person name="Shimizu F."/>
            <person name="Wakebe H."/>
            <person name="Hishigaki H."/>
            <person name="Watanabe T."/>
            <person name="Sugiyama A."/>
            <person name="Takemoto M."/>
            <person name="Kawakami B."/>
            <person name="Yamazaki M."/>
            <person name="Watanabe K."/>
            <person name="Kumagai A."/>
            <person name="Itakura S."/>
            <person name="Fukuzumi Y."/>
            <person name="Fujimori Y."/>
            <person name="Komiyama M."/>
            <person name="Tashiro H."/>
            <person name="Tanigami A."/>
            <person name="Fujiwara T."/>
            <person name="Ono T."/>
            <person name="Yamada K."/>
            <person name="Fujii Y."/>
            <person name="Ozaki K."/>
            <person name="Hirao M."/>
            <person name="Ohmori Y."/>
            <person name="Kawabata A."/>
            <person name="Hikiji T."/>
            <person name="Kobatake N."/>
            <person name="Inagaki H."/>
            <person name="Ikema Y."/>
            <person name="Okamoto S."/>
            <person name="Okitani R."/>
            <person name="Kawakami T."/>
            <person name="Noguchi S."/>
            <person name="Itoh T."/>
            <person name="Shigeta K."/>
            <person name="Senba T."/>
            <person name="Matsumura K."/>
            <person name="Nakajima Y."/>
            <person name="Mizuno T."/>
            <person name="Morinaga M."/>
            <person name="Sasaki M."/>
            <person name="Togashi T."/>
            <person name="Oyama M."/>
            <person name="Hata H."/>
            <person name="Watanabe M."/>
            <person name="Komatsu T."/>
            <person name="Mizushima-Sugano J."/>
            <person name="Satoh T."/>
            <person name="Shirai Y."/>
            <person name="Takahashi Y."/>
            <person name="Nakagawa K."/>
            <person name="Okumura K."/>
            <person name="Nagase T."/>
            <person name="Nomura N."/>
            <person name="Kikuchi H."/>
            <person name="Masuho Y."/>
            <person name="Yamashita R."/>
            <person name="Nakai K."/>
            <person name="Yada T."/>
            <person name="Nakamura Y."/>
            <person name="Ohara O."/>
            <person name="Isogai T."/>
            <person name="Sugano S."/>
        </authorList>
    </citation>
    <scope>NUCLEOTIDE SEQUENCE [LARGE SCALE MRNA] (ISOFORM 2)</scope>
    <source>
        <tissue>Testis</tissue>
    </source>
</reference>
<reference key="6">
    <citation type="journal article" date="2007" name="BMC Genomics">
        <title>The full-ORF clone resource of the German cDNA consortium.</title>
        <authorList>
            <person name="Bechtel S."/>
            <person name="Rosenfelder H."/>
            <person name="Duda A."/>
            <person name="Schmidt C.P."/>
            <person name="Ernst U."/>
            <person name="Wellenreuther R."/>
            <person name="Mehrle A."/>
            <person name="Schuster C."/>
            <person name="Bahr A."/>
            <person name="Bloecker H."/>
            <person name="Heubner D."/>
            <person name="Hoerlein A."/>
            <person name="Michel G."/>
            <person name="Wedler H."/>
            <person name="Koehrer K."/>
            <person name="Ottenwaelder B."/>
            <person name="Poustka A."/>
            <person name="Wiemann S."/>
            <person name="Schupp I."/>
        </authorList>
    </citation>
    <scope>NUCLEOTIDE SEQUENCE [LARGE SCALE MRNA] (ISOFORM 2)</scope>
    <source>
        <tissue>Testis</tissue>
    </source>
</reference>
<reference key="7">
    <citation type="journal article" date="2006" name="Nature">
        <title>The DNA sequence, annotation and analysis of human chromosome 3.</title>
        <authorList>
            <person name="Muzny D.M."/>
            <person name="Scherer S.E."/>
            <person name="Kaul R."/>
            <person name="Wang J."/>
            <person name="Yu J."/>
            <person name="Sudbrak R."/>
            <person name="Buhay C.J."/>
            <person name="Chen R."/>
            <person name="Cree A."/>
            <person name="Ding Y."/>
            <person name="Dugan-Rocha S."/>
            <person name="Gill R."/>
            <person name="Gunaratne P."/>
            <person name="Harris R.A."/>
            <person name="Hawes A.C."/>
            <person name="Hernandez J."/>
            <person name="Hodgson A.V."/>
            <person name="Hume J."/>
            <person name="Jackson A."/>
            <person name="Khan Z.M."/>
            <person name="Kovar-Smith C."/>
            <person name="Lewis L.R."/>
            <person name="Lozado R.J."/>
            <person name="Metzker M.L."/>
            <person name="Milosavljevic A."/>
            <person name="Miner G.R."/>
            <person name="Morgan M.B."/>
            <person name="Nazareth L.V."/>
            <person name="Scott G."/>
            <person name="Sodergren E."/>
            <person name="Song X.-Z."/>
            <person name="Steffen D."/>
            <person name="Wei S."/>
            <person name="Wheeler D.A."/>
            <person name="Wright M.W."/>
            <person name="Worley K.C."/>
            <person name="Yuan Y."/>
            <person name="Zhang Z."/>
            <person name="Adams C.Q."/>
            <person name="Ansari-Lari M.A."/>
            <person name="Ayele M."/>
            <person name="Brown M.J."/>
            <person name="Chen G."/>
            <person name="Chen Z."/>
            <person name="Clendenning J."/>
            <person name="Clerc-Blankenburg K.P."/>
            <person name="Chen R."/>
            <person name="Chen Z."/>
            <person name="Davis C."/>
            <person name="Delgado O."/>
            <person name="Dinh H.H."/>
            <person name="Dong W."/>
            <person name="Draper H."/>
            <person name="Ernst S."/>
            <person name="Fu G."/>
            <person name="Gonzalez-Garay M.L."/>
            <person name="Garcia D.K."/>
            <person name="Gillett W."/>
            <person name="Gu J."/>
            <person name="Hao B."/>
            <person name="Haugen E."/>
            <person name="Havlak P."/>
            <person name="He X."/>
            <person name="Hennig S."/>
            <person name="Hu S."/>
            <person name="Huang W."/>
            <person name="Jackson L.R."/>
            <person name="Jacob L.S."/>
            <person name="Kelly S.H."/>
            <person name="Kube M."/>
            <person name="Levy R."/>
            <person name="Li Z."/>
            <person name="Liu B."/>
            <person name="Liu J."/>
            <person name="Liu W."/>
            <person name="Lu J."/>
            <person name="Maheshwari M."/>
            <person name="Nguyen B.-V."/>
            <person name="Okwuonu G.O."/>
            <person name="Palmeiri A."/>
            <person name="Pasternak S."/>
            <person name="Perez L.M."/>
            <person name="Phelps K.A."/>
            <person name="Plopper F.J."/>
            <person name="Qiang B."/>
            <person name="Raymond C."/>
            <person name="Rodriguez R."/>
            <person name="Saenphimmachak C."/>
            <person name="Santibanez J."/>
            <person name="Shen H."/>
            <person name="Shen Y."/>
            <person name="Subramanian S."/>
            <person name="Tabor P.E."/>
            <person name="Verduzco D."/>
            <person name="Waldron L."/>
            <person name="Wang J."/>
            <person name="Wang J."/>
            <person name="Wang Q."/>
            <person name="Williams G.A."/>
            <person name="Wong G.K.-S."/>
            <person name="Yao Z."/>
            <person name="Zhang J."/>
            <person name="Zhang X."/>
            <person name="Zhao G."/>
            <person name="Zhou J."/>
            <person name="Zhou Y."/>
            <person name="Nelson D."/>
            <person name="Lehrach H."/>
            <person name="Reinhardt R."/>
            <person name="Naylor S.L."/>
            <person name="Yang H."/>
            <person name="Olson M."/>
            <person name="Weinstock G."/>
            <person name="Gibbs R.A."/>
        </authorList>
    </citation>
    <scope>NUCLEOTIDE SEQUENCE [LARGE SCALE GENOMIC DNA]</scope>
</reference>
<reference key="8">
    <citation type="submission" date="2005-07" db="EMBL/GenBank/DDBJ databases">
        <authorList>
            <person name="Mural R.J."/>
            <person name="Istrail S."/>
            <person name="Sutton G.G."/>
            <person name="Florea L."/>
            <person name="Halpern A.L."/>
            <person name="Mobarry C.M."/>
            <person name="Lippert R."/>
            <person name="Walenz B."/>
            <person name="Shatkay H."/>
            <person name="Dew I."/>
            <person name="Miller J.R."/>
            <person name="Flanigan M.J."/>
            <person name="Edwards N.J."/>
            <person name="Bolanos R."/>
            <person name="Fasulo D."/>
            <person name="Halldorsson B.V."/>
            <person name="Hannenhalli S."/>
            <person name="Turner R."/>
            <person name="Yooseph S."/>
            <person name="Lu F."/>
            <person name="Nusskern D.R."/>
            <person name="Shue B.C."/>
            <person name="Zheng X.H."/>
            <person name="Zhong F."/>
            <person name="Delcher A.L."/>
            <person name="Huson D.H."/>
            <person name="Kravitz S.A."/>
            <person name="Mouchard L."/>
            <person name="Reinert K."/>
            <person name="Remington K.A."/>
            <person name="Clark A.G."/>
            <person name="Waterman M.S."/>
            <person name="Eichler E.E."/>
            <person name="Adams M.D."/>
            <person name="Hunkapiller M.W."/>
            <person name="Myers E.W."/>
            <person name="Venter J.C."/>
        </authorList>
    </citation>
    <scope>NUCLEOTIDE SEQUENCE [LARGE SCALE GENOMIC DNA]</scope>
</reference>
<reference key="9">
    <citation type="journal article" date="2004" name="Genome Res.">
        <title>The status, quality, and expansion of the NIH full-length cDNA project: the Mammalian Gene Collection (MGC).</title>
        <authorList>
            <consortium name="The MGC Project Team"/>
        </authorList>
    </citation>
    <scope>NUCLEOTIDE SEQUENCE [LARGE SCALE MRNA] (ISOFORM 1)</scope>
    <source>
        <tissue>Testis</tissue>
    </source>
</reference>
<reference key="10">
    <citation type="journal article" date="2000" name="Genomics">
        <title>Identification of two novel proteins that interact with germ-cell-specific RNA-binding proteins DAZ and DAZL1.</title>
        <authorList>
            <person name="Tsui S."/>
            <person name="Dai T."/>
            <person name="Roettger S."/>
            <person name="Schempp W."/>
            <person name="Salido E.C."/>
            <person name="Yen P.H."/>
        </authorList>
    </citation>
    <scope>DOMAIN</scope>
    <scope>INTERACTION WITH DAZAP1 AND DAZAP2</scope>
    <source>
        <tissue>Testis</tissue>
    </source>
</reference>
<reference key="11">
    <citation type="journal article" date="2001" name="Proc. Natl. Acad. Sci. U.S.A.">
        <title>A gene family required for human germ cell development evolved from an ancient meiotic gene conserved in metazoans.</title>
        <authorList>
            <person name="Xu E.Y."/>
            <person name="Moore F.L."/>
            <person name="Reijo Pera R.A."/>
        </authorList>
    </citation>
    <scope>INTERACTION WITH BOLL</scope>
</reference>
<reference key="12">
    <citation type="journal article" date="2003" name="Proc. Natl. Acad. Sci. U.S.A.">
        <title>Human Pumilio-2 is expressed in embryonic stem cells and germ cells and interacts with DAZ (Deleted in AZoospermia) and DAZ-like proteins.</title>
        <authorList>
            <person name="Moore F.L."/>
            <person name="Jaruzelska J."/>
            <person name="Fox M.S."/>
            <person name="Urano J."/>
            <person name="Firpo M.T."/>
            <person name="Turek P.J."/>
            <person name="Dorfman D.M."/>
            <person name="Reijo Pera R.A."/>
        </authorList>
    </citation>
    <scope>INTERACTION WITH PUM2</scope>
</reference>
<reference key="13">
    <citation type="journal article" date="2019" name="J. Proteome Res.">
        <title>Cell Type-Specific Expression of Testis Elevated Genes Based on Transcriptomics and Antibody-Based Proteomics.</title>
        <authorList>
            <person name="Pineau C."/>
            <person name="Hikmet F."/>
            <person name="Zhang C."/>
            <person name="Oksvold P."/>
            <person name="Chen S."/>
            <person name="Fagerberg L."/>
            <person name="Uhlen M."/>
            <person name="Lindskog C."/>
        </authorList>
    </citation>
    <scope>SUBCELLULAR LOCATION</scope>
</reference>
<reference key="14">
    <citation type="journal article" date="2002" name="J. Clin. Endocrinol. Metab.">
        <title>Association of a single-nucleotide polymorphism of the deleted-in-azoospermia-like gene with susceptibility to spermatogenic failure.</title>
        <authorList>
            <person name="Teng Y.-N."/>
            <person name="Lin Y.-M."/>
            <person name="Lin Y.-H."/>
            <person name="Tsao S.-Y."/>
            <person name="Hsu C.-C."/>
            <person name="Lin S.-J."/>
            <person name="Tsai W.-C."/>
            <person name="Kuo P.-L."/>
        </authorList>
    </citation>
    <scope>VARIANTS ALA-12 AND ALA-54</scope>
</reference>
<reference key="15">
    <citation type="journal article" date="2011" name="Proc. Natl. Acad. Sci. U.S.A.">
        <title>Kinked beta-strands mediate high-affinity recognition of mRNA targets by the germ-cell regulator DAZL.</title>
        <authorList>
            <person name="Jenkins H.T."/>
            <person name="Malkova B."/>
            <person name="Edwards T.A."/>
        </authorList>
    </citation>
    <scope>VARIANT GLY-115</scope>
</reference>
<accession>Q92904</accession>
<accession>O15396</accession>
<accession>Q5HYB4</accession>
<accession>Q92909</accession>